<accession>Q2NE86</accession>
<sequence>MSDIYEIGEALIGDGPELAHIDLIVGSKQGPVGTAFATNMASMSVGHTPLLSVIRPNLPTKPATLIVPKVTVQNLDDASKIFGPAQTAVGRAVADAVEEEIIPKDIVEDIVLMVNVFIDPSAKDYRKIYQYNYGATKLAIKRAFDKYPSVDKVLAEKDRGTHPIMGFKAMKLWNPPYLQVALDLDNEDRMRSIIRDLPKRERILIEAGTPLVKKFGVEIISKIREERPGAFIIADLKTLDVGRVEVKMAADETADAVAISGLGTNESIEKAIHECSKQGIYSILDMMNVSDIPSKLEELKLKPNIVLLHRNIDSETMRDNDGEQQSEWGNIKDIKSKLGKRGLIAVAGGVTPEKVDTALANGANIIIAGRYIIGSSDVRRAAEDFLRYLPQDSDTMRLALDEDEKI</sequence>
<gene>
    <name evidence="1" type="primary">fae-hps</name>
    <name type="ordered locus">Msp_1498</name>
</gene>
<evidence type="ECO:0000255" key="1">
    <source>
        <dbReference type="HAMAP-Rule" id="MF_01268"/>
    </source>
</evidence>
<comment type="function">
    <text evidence="1">Catalyzes the condensation of formaldehyde with tetrahydromethanopterin (H(4)MPT) to 5,10-methylenetetrahydromethanopterin.</text>
</comment>
<comment type="function">
    <text evidence="1">Catalyzes the reversible formation of ribulose-5-phosphate and formaldehyde from 3-hexulose-6-phosphate.</text>
</comment>
<comment type="catalytic activity">
    <reaction evidence="1">
        <text>5,6,7,8-tetrahydromethanopterin + formaldehyde = 5,10-methylenetetrahydromethanopterin + H2O</text>
        <dbReference type="Rhea" id="RHEA:24678"/>
        <dbReference type="ChEBI" id="CHEBI:15377"/>
        <dbReference type="ChEBI" id="CHEBI:16842"/>
        <dbReference type="ChEBI" id="CHEBI:57818"/>
        <dbReference type="ChEBI" id="CHEBI:58103"/>
        <dbReference type="EC" id="4.2.1.147"/>
    </reaction>
</comment>
<comment type="catalytic activity">
    <reaction evidence="1">
        <text>D-ribulose 5-phosphate + formaldehyde = D-arabino-hex-3-ulose 6-phosphate</text>
        <dbReference type="Rhea" id="RHEA:25201"/>
        <dbReference type="ChEBI" id="CHEBI:16842"/>
        <dbReference type="ChEBI" id="CHEBI:58121"/>
        <dbReference type="ChEBI" id="CHEBI:58542"/>
        <dbReference type="EC" id="4.1.2.43"/>
    </reaction>
</comment>
<comment type="pathway">
    <text evidence="1">Carbohydrate biosynthesis; D-ribose 5-phosphate biosynthesis.</text>
</comment>
<comment type="similarity">
    <text evidence="1">In the N-terminal section; belongs to the formaldehyde-activating enzyme family.</text>
</comment>
<comment type="similarity">
    <text evidence="1">In the C-terminal section; belongs to the HPS/KGPDC family. HPS subfamily.</text>
</comment>
<protein>
    <recommendedName>
        <fullName evidence="1">Bifunctional enzyme Fae/Hps</fullName>
    </recommendedName>
    <domain>
        <recommendedName>
            <fullName evidence="1">5,6,7,8-tetrahydromethanopterin hydro-lyase</fullName>
            <ecNumber evidence="1">4.2.1.147</ecNumber>
        </recommendedName>
        <alternativeName>
            <fullName evidence="1">Formaldehyde-activating enzyme</fullName>
            <shortName evidence="1">Fae</shortName>
        </alternativeName>
    </domain>
    <domain>
        <recommendedName>
            <fullName evidence="1">3-hexulose-6-phosphate synthase</fullName>
            <shortName evidence="1">HPS</shortName>
            <ecNumber evidence="1">4.1.2.43</ecNumber>
        </recommendedName>
        <alternativeName>
            <fullName evidence="1">D-arabino-3-hexulose-6-phosphate formaldehyde lyase</fullName>
        </alternativeName>
    </domain>
</protein>
<name>FAEHP_METST</name>
<organism>
    <name type="scientific">Methanosphaera stadtmanae (strain ATCC 43021 / DSM 3091 / JCM 11832 / MCB-3)</name>
    <dbReference type="NCBI Taxonomy" id="339860"/>
    <lineage>
        <taxon>Archaea</taxon>
        <taxon>Methanobacteriati</taxon>
        <taxon>Methanobacteriota</taxon>
        <taxon>Methanomada group</taxon>
        <taxon>Methanobacteria</taxon>
        <taxon>Methanobacteriales</taxon>
        <taxon>Methanobacteriaceae</taxon>
        <taxon>Methanosphaera</taxon>
    </lineage>
</organism>
<feature type="chain" id="PRO_0000236087" description="Bifunctional enzyme Fae/Hps">
    <location>
        <begin position="1"/>
        <end position="406"/>
    </location>
</feature>
<feature type="region of interest" description="Formaldehyde-activating enzyme" evidence="1">
    <location>
        <begin position="1"/>
        <end position="164"/>
    </location>
</feature>
<feature type="region of interest" description="3-hexulose-6-phosphate synthase" evidence="1">
    <location>
        <begin position="165"/>
        <end position="406"/>
    </location>
</feature>
<feature type="active site" description="Proton donor" evidence="1">
    <location>
        <position position="20"/>
    </location>
</feature>
<feature type="binding site" evidence="1">
    <location>
        <position position="22"/>
    </location>
    <ligand>
        <name>substrate</name>
    </ligand>
</feature>
<feature type="binding site" evidence="1">
    <location>
        <position position="51"/>
    </location>
    <ligand>
        <name>substrate</name>
    </ligand>
</feature>
<feature type="binding site" evidence="1">
    <location>
        <position position="69"/>
    </location>
    <ligand>
        <name>substrate</name>
    </ligand>
</feature>
<feature type="binding site" evidence="1">
    <location>
        <position position="71"/>
    </location>
    <ligand>
        <name>substrate</name>
    </ligand>
</feature>
<feature type="binding site" evidence="1">
    <location>
        <position position="86"/>
    </location>
    <ligand>
        <name>substrate</name>
    </ligand>
</feature>
<reference key="1">
    <citation type="journal article" date="2006" name="J. Bacteriol.">
        <title>The genome sequence of Methanosphaera stadtmanae reveals why this human intestinal archaeon is restricted to methanol and H2 for methane formation and ATP synthesis.</title>
        <authorList>
            <person name="Fricke W.F."/>
            <person name="Seedorf H."/>
            <person name="Henne A."/>
            <person name="Kruer M."/>
            <person name="Liesegang H."/>
            <person name="Hedderich R."/>
            <person name="Gottschalk G."/>
            <person name="Thauer R.K."/>
        </authorList>
    </citation>
    <scope>NUCLEOTIDE SEQUENCE [LARGE SCALE GENOMIC DNA]</scope>
    <source>
        <strain>ATCC 43021 / DSM 3091 / JCM 11832 / MCB-3</strain>
    </source>
</reference>
<proteinExistence type="inferred from homology"/>
<keyword id="KW-0119">Carbohydrate metabolism</keyword>
<keyword id="KW-0456">Lyase</keyword>
<keyword id="KW-0511">Multifunctional enzyme</keyword>
<keyword id="KW-1185">Reference proteome</keyword>
<dbReference type="EC" id="4.2.1.147" evidence="1"/>
<dbReference type="EC" id="4.1.2.43" evidence="1"/>
<dbReference type="EMBL" id="CP000102">
    <property type="protein sequence ID" value="ABC57867.1"/>
    <property type="molecule type" value="Genomic_DNA"/>
</dbReference>
<dbReference type="SMR" id="Q2NE86"/>
<dbReference type="STRING" id="339860.Msp_1498"/>
<dbReference type="KEGG" id="mst:Msp_1498"/>
<dbReference type="eggNOG" id="arCOG00103">
    <property type="taxonomic scope" value="Archaea"/>
</dbReference>
<dbReference type="HOGENOM" id="CLU_701335_0_0_2"/>
<dbReference type="UniPathway" id="UPA00293"/>
<dbReference type="Proteomes" id="UP000001931">
    <property type="component" value="Chromosome"/>
</dbReference>
<dbReference type="GO" id="GO:0033982">
    <property type="term" value="F:3-dehydro-L-gulonate-6-phosphate decarboxylase activity"/>
    <property type="evidence" value="ECO:0007669"/>
    <property type="project" value="TreeGrafter"/>
</dbReference>
<dbReference type="GO" id="GO:0016840">
    <property type="term" value="F:carbon-nitrogen lyase activity"/>
    <property type="evidence" value="ECO:0007669"/>
    <property type="project" value="InterPro"/>
</dbReference>
<dbReference type="GO" id="GO:0043801">
    <property type="term" value="F:hexulose-6-phosphate synthase activity"/>
    <property type="evidence" value="ECO:0007669"/>
    <property type="project" value="UniProtKB-UniRule"/>
</dbReference>
<dbReference type="GO" id="GO:0016836">
    <property type="term" value="F:hydro-lyase activity"/>
    <property type="evidence" value="ECO:0007669"/>
    <property type="project" value="UniProtKB-UniRule"/>
</dbReference>
<dbReference type="GO" id="GO:0004590">
    <property type="term" value="F:orotidine-5'-phosphate decarboxylase activity"/>
    <property type="evidence" value="ECO:0007669"/>
    <property type="project" value="InterPro"/>
</dbReference>
<dbReference type="GO" id="GO:0006207">
    <property type="term" value="P:'de novo' pyrimidine nucleobase biosynthetic process"/>
    <property type="evidence" value="ECO:0007669"/>
    <property type="project" value="InterPro"/>
</dbReference>
<dbReference type="GO" id="GO:0016051">
    <property type="term" value="P:carbohydrate biosynthetic process"/>
    <property type="evidence" value="ECO:0007669"/>
    <property type="project" value="UniProtKB-UniRule"/>
</dbReference>
<dbReference type="GO" id="GO:0019854">
    <property type="term" value="P:L-ascorbic acid catabolic process"/>
    <property type="evidence" value="ECO:0007669"/>
    <property type="project" value="TreeGrafter"/>
</dbReference>
<dbReference type="CDD" id="cd04726">
    <property type="entry name" value="KGPDC_HPS"/>
    <property type="match status" value="1"/>
</dbReference>
<dbReference type="FunFam" id="3.30.230.60:FF:000001">
    <property type="entry name" value="5,6,7,8-tetrahydromethanopterin hydro-lyase"/>
    <property type="match status" value="1"/>
</dbReference>
<dbReference type="Gene3D" id="3.20.20.70">
    <property type="entry name" value="Aldolase class I"/>
    <property type="match status" value="1"/>
</dbReference>
<dbReference type="Gene3D" id="3.30.230.60">
    <property type="entry name" value="Formaldehyde-activating enzyme"/>
    <property type="match status" value="1"/>
</dbReference>
<dbReference type="HAMAP" id="MF_01268">
    <property type="entry name" value="Fae_Hps"/>
    <property type="match status" value="1"/>
</dbReference>
<dbReference type="InterPro" id="IPR013785">
    <property type="entry name" value="Aldolase_TIM"/>
</dbReference>
<dbReference type="InterPro" id="IPR020868">
    <property type="entry name" value="Fae/Hps"/>
</dbReference>
<dbReference type="InterPro" id="IPR014826">
    <property type="entry name" value="HCHO-activating_enzyme"/>
</dbReference>
<dbReference type="InterPro" id="IPR037075">
    <property type="entry name" value="HCHO-activating_enzyme_sf"/>
</dbReference>
<dbReference type="InterPro" id="IPR041710">
    <property type="entry name" value="HPS/KGPDC"/>
</dbReference>
<dbReference type="InterPro" id="IPR001754">
    <property type="entry name" value="OMPdeCOase_dom"/>
</dbReference>
<dbReference type="InterPro" id="IPR020568">
    <property type="entry name" value="Ribosomal_Su5_D2-typ_SF"/>
</dbReference>
<dbReference type="InterPro" id="IPR011060">
    <property type="entry name" value="RibuloseP-bd_barrel"/>
</dbReference>
<dbReference type="NCBIfam" id="TIGR03126">
    <property type="entry name" value="one_C_fae"/>
    <property type="match status" value="1"/>
</dbReference>
<dbReference type="NCBIfam" id="NF009833">
    <property type="entry name" value="PRK13307.1"/>
    <property type="match status" value="1"/>
</dbReference>
<dbReference type="PANTHER" id="PTHR35039">
    <property type="entry name" value="3-KETO-L-GULONATE-6-PHOSPHATE DECARBOXYLASE SGBH-RELATED"/>
    <property type="match status" value="1"/>
</dbReference>
<dbReference type="PANTHER" id="PTHR35039:SF3">
    <property type="entry name" value="3-KETO-L-GULONATE-6-PHOSPHATE DECARBOXYLASE SGBH-RELATED"/>
    <property type="match status" value="1"/>
</dbReference>
<dbReference type="Pfam" id="PF08714">
    <property type="entry name" value="Fae"/>
    <property type="match status" value="1"/>
</dbReference>
<dbReference type="Pfam" id="PF00215">
    <property type="entry name" value="OMPdecase"/>
    <property type="match status" value="1"/>
</dbReference>
<dbReference type="SMART" id="SM00934">
    <property type="entry name" value="OMPdecase"/>
    <property type="match status" value="1"/>
</dbReference>
<dbReference type="SUPFAM" id="SSF54211">
    <property type="entry name" value="Ribosomal protein S5 domain 2-like"/>
    <property type="match status" value="1"/>
</dbReference>
<dbReference type="SUPFAM" id="SSF51366">
    <property type="entry name" value="Ribulose-phoshate binding barrel"/>
    <property type="match status" value="1"/>
</dbReference>